<comment type="function">
    <text evidence="1">One of the primary rRNA binding proteins, it binds directly near the 3'-end of the 23S rRNA, where it nucleates assembly of the 50S subunit.</text>
</comment>
<comment type="subunit">
    <text evidence="1">Part of the 50S ribosomal subunit. Forms a cluster with proteins L14 and L24e.</text>
</comment>
<comment type="similarity">
    <text evidence="1">Belongs to the universal ribosomal protein uL3 family.</text>
</comment>
<proteinExistence type="inferred from homology"/>
<name>RL3_METBF</name>
<evidence type="ECO:0000255" key="1">
    <source>
        <dbReference type="HAMAP-Rule" id="MF_01325"/>
    </source>
</evidence>
<evidence type="ECO:0000256" key="2">
    <source>
        <dbReference type="SAM" id="MobiDB-lite"/>
    </source>
</evidence>
<evidence type="ECO:0000305" key="3"/>
<keyword id="KW-0687">Ribonucleoprotein</keyword>
<keyword id="KW-0689">Ribosomal protein</keyword>
<keyword id="KW-0694">RNA-binding</keyword>
<keyword id="KW-0699">rRNA-binding</keyword>
<sequence length="337" mass="36933">MASIHRPKRGSLAFSPRKRAKSHIPRFRAWPEATGEPRLQGFAGYKVGMTHVIMVDDTKNSLTQGMEISVPVTIIETPAIRVAAIRAYAEDTAGEKAIAEVWATDLDPELKRRIPVPKGDNMAETLGNIGKMIEEGKVSDIRAVTYTLPKSLTGVPKKTPDIMESGISARDLNTKFEYAKSILGTLVSITDVFKTGTLIDTAAITIGKGTQGPAKRWGIQLMKGKHSRQGSLRQIGTLGGFGLRRVSWRVPQMGQTGYHQRTEFNKRILKIGSDGEEVTPEGGFINYGLVRGDYVLIKGSVPGPSKRLIRLRDPIRAKKADLGEPNILHISRESKQG</sequence>
<protein>
    <recommendedName>
        <fullName evidence="1">Large ribosomal subunit protein uL3</fullName>
    </recommendedName>
    <alternativeName>
        <fullName evidence="3">50S ribosomal protein L3</fullName>
    </alternativeName>
</protein>
<feature type="chain" id="PRO_0000241440" description="Large ribosomal subunit protein uL3">
    <location>
        <begin position="1"/>
        <end position="337"/>
    </location>
</feature>
<feature type="region of interest" description="Disordered" evidence="2">
    <location>
        <begin position="1"/>
        <end position="20"/>
    </location>
</feature>
<accession>Q46G95</accession>
<reference key="1">
    <citation type="journal article" date="2006" name="J. Bacteriol.">
        <title>The Methanosarcina barkeri genome: comparative analysis with Methanosarcina acetivorans and Methanosarcina mazei reveals extensive rearrangement within methanosarcinal genomes.</title>
        <authorList>
            <person name="Maeder D.L."/>
            <person name="Anderson I."/>
            <person name="Brettin T.S."/>
            <person name="Bruce D.C."/>
            <person name="Gilna P."/>
            <person name="Han C.S."/>
            <person name="Lapidus A."/>
            <person name="Metcalf W.W."/>
            <person name="Saunders E."/>
            <person name="Tapia R."/>
            <person name="Sowers K.R."/>
        </authorList>
    </citation>
    <scope>NUCLEOTIDE SEQUENCE [LARGE SCALE GENOMIC DNA]</scope>
    <source>
        <strain>Fusaro / DSM 804</strain>
    </source>
</reference>
<dbReference type="EMBL" id="CP000099">
    <property type="protein sequence ID" value="AAZ69097.1"/>
    <property type="molecule type" value="Genomic_DNA"/>
</dbReference>
<dbReference type="SMR" id="Q46G95"/>
<dbReference type="STRING" id="269797.Mbar_A0110"/>
<dbReference type="PaxDb" id="269797-Mbar_A0110"/>
<dbReference type="KEGG" id="mba:Mbar_A0110"/>
<dbReference type="eggNOG" id="arCOG04070">
    <property type="taxonomic scope" value="Archaea"/>
</dbReference>
<dbReference type="HOGENOM" id="CLU_033361_2_0_2"/>
<dbReference type="OrthoDB" id="6121at2157"/>
<dbReference type="GO" id="GO:0022625">
    <property type="term" value="C:cytosolic large ribosomal subunit"/>
    <property type="evidence" value="ECO:0007669"/>
    <property type="project" value="TreeGrafter"/>
</dbReference>
<dbReference type="GO" id="GO:0019843">
    <property type="term" value="F:rRNA binding"/>
    <property type="evidence" value="ECO:0007669"/>
    <property type="project" value="UniProtKB-UniRule"/>
</dbReference>
<dbReference type="GO" id="GO:0003735">
    <property type="term" value="F:structural constituent of ribosome"/>
    <property type="evidence" value="ECO:0007669"/>
    <property type="project" value="InterPro"/>
</dbReference>
<dbReference type="GO" id="GO:0006412">
    <property type="term" value="P:translation"/>
    <property type="evidence" value="ECO:0007669"/>
    <property type="project" value="UniProtKB-UniRule"/>
</dbReference>
<dbReference type="Gene3D" id="3.30.1430.10">
    <property type="match status" value="1"/>
</dbReference>
<dbReference type="Gene3D" id="4.10.960.10">
    <property type="entry name" value="Ribosomal protein L3, domain 3"/>
    <property type="match status" value="1"/>
</dbReference>
<dbReference type="Gene3D" id="2.40.30.10">
    <property type="entry name" value="Translation factors"/>
    <property type="match status" value="1"/>
</dbReference>
<dbReference type="HAMAP" id="MF_01325_A">
    <property type="entry name" value="Ribosomal_uL3_A"/>
    <property type="match status" value="1"/>
</dbReference>
<dbReference type="InterPro" id="IPR045077">
    <property type="entry name" value="L3_arc_euk"/>
</dbReference>
<dbReference type="InterPro" id="IPR044892">
    <property type="entry name" value="Ribosomal_L3_dom_3_arc_sf"/>
</dbReference>
<dbReference type="InterPro" id="IPR000597">
    <property type="entry name" value="Ribosomal_uL3"/>
</dbReference>
<dbReference type="InterPro" id="IPR019928">
    <property type="entry name" value="Ribosomal_uL3_arc"/>
</dbReference>
<dbReference type="InterPro" id="IPR019926">
    <property type="entry name" value="Ribosomal_uL3_CS"/>
</dbReference>
<dbReference type="InterPro" id="IPR009000">
    <property type="entry name" value="Transl_B-barrel_sf"/>
</dbReference>
<dbReference type="NCBIfam" id="TIGR03626">
    <property type="entry name" value="L3_arch"/>
    <property type="match status" value="1"/>
</dbReference>
<dbReference type="NCBIfam" id="NF003261">
    <property type="entry name" value="PRK04231.1"/>
    <property type="match status" value="1"/>
</dbReference>
<dbReference type="PANTHER" id="PTHR11363">
    <property type="entry name" value="60S RIBOSOMAL PROTEIN L3-RELATED"/>
    <property type="match status" value="1"/>
</dbReference>
<dbReference type="PANTHER" id="PTHR11363:SF5">
    <property type="entry name" value="LARGE RIBOSOMAL SUBUNIT PROTEIN UL3"/>
    <property type="match status" value="1"/>
</dbReference>
<dbReference type="Pfam" id="PF00297">
    <property type="entry name" value="Ribosomal_L3"/>
    <property type="match status" value="1"/>
</dbReference>
<dbReference type="SUPFAM" id="SSF50447">
    <property type="entry name" value="Translation proteins"/>
    <property type="match status" value="1"/>
</dbReference>
<dbReference type="PROSITE" id="PS00474">
    <property type="entry name" value="RIBOSOMAL_L3"/>
    <property type="match status" value="1"/>
</dbReference>
<organism>
    <name type="scientific">Methanosarcina barkeri (strain Fusaro / DSM 804)</name>
    <dbReference type="NCBI Taxonomy" id="269797"/>
    <lineage>
        <taxon>Archaea</taxon>
        <taxon>Methanobacteriati</taxon>
        <taxon>Methanobacteriota</taxon>
        <taxon>Stenosarchaea group</taxon>
        <taxon>Methanomicrobia</taxon>
        <taxon>Methanosarcinales</taxon>
        <taxon>Methanosarcinaceae</taxon>
        <taxon>Methanosarcina</taxon>
    </lineage>
</organism>
<gene>
    <name evidence="1" type="primary">rpl3</name>
    <name type="ordered locus">Mbar_A0110</name>
</gene>